<accession>P12634</accession>
<dbReference type="EMBL" id="M21853">
    <property type="protein sequence ID" value="AAA23036.1"/>
    <property type="molecule type" value="Genomic_DNA"/>
</dbReference>
<dbReference type="EMBL" id="AE005673">
    <property type="protein sequence ID" value="AAK24036.1"/>
    <property type="molecule type" value="Genomic_DNA"/>
</dbReference>
<dbReference type="EMBL" id="S52478">
    <property type="protein sequence ID" value="AAB24740.1"/>
    <property type="molecule type" value="Genomic_DNA"/>
</dbReference>
<dbReference type="PIR" id="A32353">
    <property type="entry name" value="A32353"/>
</dbReference>
<dbReference type="RefSeq" id="NP_420868.1">
    <property type="nucleotide sequence ID" value="NC_002696.2"/>
</dbReference>
<dbReference type="RefSeq" id="WP_010919926.1">
    <property type="nucleotide sequence ID" value="NC_002696.2"/>
</dbReference>
<dbReference type="SMR" id="P12634"/>
<dbReference type="STRING" id="190650.CC_2065"/>
<dbReference type="EnsemblBacteria" id="AAK24036">
    <property type="protein sequence ID" value="AAK24036"/>
    <property type="gene ID" value="CC_2065"/>
</dbReference>
<dbReference type="KEGG" id="ccr:CC_2065"/>
<dbReference type="PATRIC" id="fig|190650.5.peg.2084"/>
<dbReference type="eggNOG" id="COG1261">
    <property type="taxonomic scope" value="Bacteria"/>
</dbReference>
<dbReference type="HOGENOM" id="CLU_096457_0_0_5"/>
<dbReference type="BioCyc" id="CAULO:CC2065-MONOMER"/>
<dbReference type="Proteomes" id="UP000001816">
    <property type="component" value="Chromosome"/>
</dbReference>
<dbReference type="GO" id="GO:0009425">
    <property type="term" value="C:bacterial-type flagellum basal body"/>
    <property type="evidence" value="ECO:0007669"/>
    <property type="project" value="UniProtKB-SubCell"/>
</dbReference>
<dbReference type="GO" id="GO:0042597">
    <property type="term" value="C:periplasmic space"/>
    <property type="evidence" value="ECO:0007669"/>
    <property type="project" value="UniProtKB-SubCell"/>
</dbReference>
<dbReference type="GO" id="GO:0044780">
    <property type="term" value="P:bacterial-type flagellum assembly"/>
    <property type="evidence" value="ECO:0007669"/>
    <property type="project" value="InterPro"/>
</dbReference>
<dbReference type="CDD" id="cd11614">
    <property type="entry name" value="SAF_CpaB_FlgA_like"/>
    <property type="match status" value="1"/>
</dbReference>
<dbReference type="Gene3D" id="2.30.30.760">
    <property type="match status" value="1"/>
</dbReference>
<dbReference type="InterPro" id="IPR017585">
    <property type="entry name" value="Flag_basal_body_FlgA_C"/>
</dbReference>
<dbReference type="InterPro" id="IPR039246">
    <property type="entry name" value="Flagellar_FlgA"/>
</dbReference>
<dbReference type="InterPro" id="IPR013974">
    <property type="entry name" value="SAF"/>
</dbReference>
<dbReference type="NCBIfam" id="TIGR03170">
    <property type="entry name" value="flgA_cterm"/>
    <property type="match status" value="1"/>
</dbReference>
<dbReference type="PANTHER" id="PTHR36307">
    <property type="entry name" value="FLAGELLA BASAL BODY P-RING FORMATION PROTEIN FLGA"/>
    <property type="match status" value="1"/>
</dbReference>
<dbReference type="PANTHER" id="PTHR36307:SF1">
    <property type="entry name" value="FLAGELLA BASAL BODY P-RING FORMATION PROTEIN FLGA"/>
    <property type="match status" value="1"/>
</dbReference>
<dbReference type="Pfam" id="PF13144">
    <property type="entry name" value="ChapFlgA"/>
    <property type="match status" value="1"/>
</dbReference>
<dbReference type="SMART" id="SM00858">
    <property type="entry name" value="SAF"/>
    <property type="match status" value="1"/>
</dbReference>
<feature type="signal peptide">
    <location>
        <begin position="1"/>
        <end position="29"/>
    </location>
</feature>
<feature type="chain" id="PRO_0000009346" description="Distal basal body ring component protein">
    <location>
        <begin position="30"/>
        <end position="267"/>
    </location>
</feature>
<feature type="sequence conflict" description="In Ref. 1; AAA23036." evidence="2" ref="1">
    <original>A</original>
    <variation>P</variation>
    <location>
        <position position="131"/>
    </location>
</feature>
<organism>
    <name type="scientific">Caulobacter vibrioides (strain ATCC 19089 / CIP 103742 / CB 15)</name>
    <name type="common">Caulobacter crescentus</name>
    <dbReference type="NCBI Taxonomy" id="190650"/>
    <lineage>
        <taxon>Bacteria</taxon>
        <taxon>Pseudomonadati</taxon>
        <taxon>Pseudomonadota</taxon>
        <taxon>Alphaproteobacteria</taxon>
        <taxon>Caulobacterales</taxon>
        <taxon>Caulobacteraceae</taxon>
        <taxon>Caulobacter</taxon>
    </lineage>
</organism>
<proteinExistence type="predicted"/>
<gene>
    <name type="primary">flaD</name>
    <name type="ordered locus">CC_2065</name>
</gene>
<keyword id="KW-0975">Bacterial flagellum</keyword>
<keyword id="KW-0574">Periplasm</keyword>
<keyword id="KW-1185">Reference proteome</keyword>
<keyword id="KW-0732">Signal</keyword>
<comment type="function">
    <text>FlaD might be the structural protein of the distal basal body ring P, or it is necessary for the assembly of the P ring.</text>
</comment>
<comment type="subunit">
    <text>FlaD is a subunit of the flagellar transenvelope basal body.</text>
</comment>
<comment type="subcellular location">
    <subcellularLocation>
        <location evidence="2">Periplasm</location>
    </subcellularLocation>
    <subcellularLocation>
        <location evidence="2">Bacterial flagellum basal body</location>
    </subcellularLocation>
</comment>
<comment type="disruption phenotype">
    <text evidence="1">Cells synthesize a flagellar basal body, lacking the distal P and L rings.</text>
</comment>
<reference key="1">
    <citation type="journal article" date="1988" name="J. Bacteriol.">
        <title>Organization and temporal expression of a flagellar basal body gene in Caulobacter crescentus.</title>
        <authorList>
            <person name="Hahnenberger K.M."/>
            <person name="Shapiro L."/>
        </authorList>
    </citation>
    <scope>NUCLEOTIDE SEQUENCE [GENOMIC DNA]</scope>
    <scope>DISRUPTION PHENOTYPE</scope>
    <source>
        <strain>ATCC 19089 / CIP 103742 / CB 15</strain>
    </source>
</reference>
<reference key="2">
    <citation type="journal article" date="2001" name="Proc. Natl. Acad. Sci. U.S.A.">
        <title>Complete genome sequence of Caulobacter crescentus.</title>
        <authorList>
            <person name="Nierman W.C."/>
            <person name="Feldblyum T.V."/>
            <person name="Laub M.T."/>
            <person name="Paulsen I.T."/>
            <person name="Nelson K.E."/>
            <person name="Eisen J.A."/>
            <person name="Heidelberg J.F."/>
            <person name="Alley M.R.K."/>
            <person name="Ohta N."/>
            <person name="Maddock J.R."/>
            <person name="Potocka I."/>
            <person name="Nelson W.C."/>
            <person name="Newton A."/>
            <person name="Stephens C."/>
            <person name="Phadke N.D."/>
            <person name="Ely B."/>
            <person name="DeBoy R.T."/>
            <person name="Dodson R.J."/>
            <person name="Durkin A.S."/>
            <person name="Gwinn M.L."/>
            <person name="Haft D.H."/>
            <person name="Kolonay J.F."/>
            <person name="Smit J."/>
            <person name="Craven M.B."/>
            <person name="Khouri H.M."/>
            <person name="Shetty J."/>
            <person name="Berry K.J."/>
            <person name="Utterback T.R."/>
            <person name="Tran K."/>
            <person name="Wolf A.M."/>
            <person name="Vamathevan J.J."/>
            <person name="Ermolaeva M.D."/>
            <person name="White O."/>
            <person name="Salzberg S.L."/>
            <person name="Venter J.C."/>
            <person name="Shapiro L."/>
            <person name="Fraser C.M."/>
        </authorList>
    </citation>
    <scope>NUCLEOTIDE SEQUENCE [LARGE SCALE GENOMIC DNA]</scope>
    <source>
        <strain>ATCC 19089 / CIP 103742 / CB 15</strain>
    </source>
</reference>
<reference key="3">
    <citation type="journal article" date="1992" name="J. Mol. Biol.">
        <title>Organization and ordered expression of Caulobacter genes encoding flagellar basal body rod and ring proteins.</title>
        <authorList>
            <person name="Dingwall A."/>
            <person name="Garman J.D."/>
            <person name="Shapiro L."/>
        </authorList>
    </citation>
    <scope>NUCLEOTIDE SEQUENCE [GENOMIC DNA] OF 1-6</scope>
    <source>
        <strain>ATCC 19089 / CIP 103742 / CB 15</strain>
    </source>
</reference>
<sequence>MKAFLFAAAATLVITALSAPAFAGTPVTLRMDTTDADGRITLGDLFDGVSGPAANVVVAARMSATAVLEAGQVQMSARRAGYVWTNANGVRRIIVREGVDNGGVSSSAAPGAQLAGARLAGAPRANVEVLAYARSLSAGEIVQPQDLIWVKMAGAPADAPRDADAVIGLAAKRPLREGAPVGMKDVAAAQVIKSGDLITITYEDGGISLSLQGKAMAAAAAGDVFAVQNTLSKKIIQAVAVGPGAAAVGPQAQSLQARSQPLRFAAR</sequence>
<name>FLAD_CAUVC</name>
<protein>
    <recommendedName>
        <fullName>Distal basal body ring component protein</fullName>
    </recommendedName>
</protein>
<evidence type="ECO:0000269" key="1">
    <source>
    </source>
</evidence>
<evidence type="ECO:0000305" key="2"/>